<protein>
    <recommendedName>
        <fullName>Histone-lysine N-methyltransferase SET9</fullName>
        <ecNumber evidence="2">2.1.1.372</ecNumber>
    </recommendedName>
    <alternativeName>
        <fullName>SET domain protein 9</fullName>
    </alternativeName>
</protein>
<accession>Q4I8C9</accession>
<accession>A0A098DNJ7</accession>
<accession>A0A0E0SAI3</accession>
<accession>A0A1C3YKX8</accession>
<accession>V6RDC8</accession>
<proteinExistence type="inferred from homology"/>
<dbReference type="EC" id="2.1.1.372" evidence="2"/>
<dbReference type="EMBL" id="DS231666">
    <property type="protein sequence ID" value="ESU12633.1"/>
    <property type="molecule type" value="Genomic_DNA"/>
</dbReference>
<dbReference type="EMBL" id="HG970335">
    <property type="protein sequence ID" value="SCB65068.1"/>
    <property type="molecule type" value="Genomic_DNA"/>
</dbReference>
<dbReference type="RefSeq" id="XP_011326140.1">
    <property type="nucleotide sequence ID" value="XM_011327838.1"/>
</dbReference>
<dbReference type="SMR" id="Q4I8C9"/>
<dbReference type="STRING" id="229533.Q4I8C9"/>
<dbReference type="GeneID" id="23553658"/>
<dbReference type="KEGG" id="fgr:FGSG_06529"/>
<dbReference type="VEuPathDB" id="FungiDB:FGRAMPH1_01G22513"/>
<dbReference type="eggNOG" id="KOG2589">
    <property type="taxonomic scope" value="Eukaryota"/>
</dbReference>
<dbReference type="HOGENOM" id="CLU_013724_0_0_1"/>
<dbReference type="InParanoid" id="Q4I8C9"/>
<dbReference type="OrthoDB" id="128161at110618"/>
<dbReference type="Proteomes" id="UP000070720">
    <property type="component" value="Chromosome 4"/>
</dbReference>
<dbReference type="GO" id="GO:0005694">
    <property type="term" value="C:chromosome"/>
    <property type="evidence" value="ECO:0007669"/>
    <property type="project" value="UniProtKB-SubCell"/>
</dbReference>
<dbReference type="GO" id="GO:0005634">
    <property type="term" value="C:nucleus"/>
    <property type="evidence" value="ECO:0007669"/>
    <property type="project" value="UniProtKB-SubCell"/>
</dbReference>
<dbReference type="GO" id="GO:0140943">
    <property type="term" value="F:histone H4K20 trimethyltransferase activity"/>
    <property type="evidence" value="ECO:0007669"/>
    <property type="project" value="UniProtKB-EC"/>
</dbReference>
<dbReference type="GO" id="GO:0032259">
    <property type="term" value="P:methylation"/>
    <property type="evidence" value="ECO:0007669"/>
    <property type="project" value="UniProtKB-KW"/>
</dbReference>
<dbReference type="CDD" id="cd10524">
    <property type="entry name" value="SET_Suv4-20-like"/>
    <property type="match status" value="1"/>
</dbReference>
<dbReference type="Gene3D" id="1.10.10.1700">
    <property type="entry name" value="Histone-lysine N-methyltransferase"/>
    <property type="match status" value="1"/>
</dbReference>
<dbReference type="Gene3D" id="2.170.270.10">
    <property type="entry name" value="SET domain"/>
    <property type="match status" value="1"/>
</dbReference>
<dbReference type="InterPro" id="IPR041938">
    <property type="entry name" value="Hist-Lys_N-MTase_N"/>
</dbReference>
<dbReference type="InterPro" id="IPR025783">
    <property type="entry name" value="Set9_fungi"/>
</dbReference>
<dbReference type="InterPro" id="IPR001214">
    <property type="entry name" value="SET_dom"/>
</dbReference>
<dbReference type="InterPro" id="IPR046341">
    <property type="entry name" value="SET_dom_sf"/>
</dbReference>
<dbReference type="InterPro" id="IPR039977">
    <property type="entry name" value="Suv4-20/Set9"/>
</dbReference>
<dbReference type="PANTHER" id="PTHR12977:SF4">
    <property type="entry name" value="HISTONE-LYSINE N-METHYLTRANSFERASE KMT5B"/>
    <property type="match status" value="1"/>
</dbReference>
<dbReference type="PANTHER" id="PTHR12977">
    <property type="entry name" value="SUPPRESSOR OF VARIEGATION 4-20-RELATED"/>
    <property type="match status" value="1"/>
</dbReference>
<dbReference type="Pfam" id="PF00856">
    <property type="entry name" value="SET"/>
    <property type="match status" value="1"/>
</dbReference>
<dbReference type="SMART" id="SM00317">
    <property type="entry name" value="SET"/>
    <property type="match status" value="1"/>
</dbReference>
<dbReference type="SUPFAM" id="SSF82199">
    <property type="entry name" value="SET domain"/>
    <property type="match status" value="1"/>
</dbReference>
<dbReference type="PROSITE" id="PS51567">
    <property type="entry name" value="SAM_MT43_SUVAR420_1"/>
    <property type="match status" value="1"/>
</dbReference>
<dbReference type="PROSITE" id="PS50280">
    <property type="entry name" value="SET"/>
    <property type="match status" value="1"/>
</dbReference>
<comment type="function">
    <text evidence="2">Histone methyltransferase that trimethylates 'Lys-20' of histone H4 to form H4K20me3.</text>
</comment>
<comment type="catalytic activity">
    <reaction evidence="2 4">
        <text>L-lysyl(20)-[histone H4] + 3 S-adenosyl-L-methionine = N(6),N(6),N(6)-trimethyl-L-lysyl(20)-[histone H4] + 3 S-adenosyl-L-homocysteine + 3 H(+)</text>
        <dbReference type="Rhea" id="RHEA:64456"/>
        <dbReference type="Rhea" id="RHEA-COMP:15554"/>
        <dbReference type="Rhea" id="RHEA-COMP:15998"/>
        <dbReference type="ChEBI" id="CHEBI:15378"/>
        <dbReference type="ChEBI" id="CHEBI:29969"/>
        <dbReference type="ChEBI" id="CHEBI:57856"/>
        <dbReference type="ChEBI" id="CHEBI:59789"/>
        <dbReference type="ChEBI" id="CHEBI:61961"/>
        <dbReference type="EC" id="2.1.1.372"/>
    </reaction>
</comment>
<comment type="subcellular location">
    <subcellularLocation>
        <location evidence="1">Nucleus</location>
    </subcellularLocation>
    <subcellularLocation>
        <location evidence="1">Chromosome</location>
    </subcellularLocation>
</comment>
<comment type="similarity">
    <text evidence="4">Belongs to the class V-like SAM-binding methyltransferase superfamily. Histone-lysine methyltransferase family. Suvar4-20 subfamily.</text>
</comment>
<organism>
    <name type="scientific">Gibberella zeae (strain ATCC MYA-4620 / CBS 123657 / FGSC 9075 / NRRL 31084 / PH-1)</name>
    <name type="common">Wheat head blight fungus</name>
    <name type="synonym">Fusarium graminearum</name>
    <dbReference type="NCBI Taxonomy" id="229533"/>
    <lineage>
        <taxon>Eukaryota</taxon>
        <taxon>Fungi</taxon>
        <taxon>Dikarya</taxon>
        <taxon>Ascomycota</taxon>
        <taxon>Pezizomycotina</taxon>
        <taxon>Sordariomycetes</taxon>
        <taxon>Hypocreomycetidae</taxon>
        <taxon>Hypocreales</taxon>
        <taxon>Nectriaceae</taxon>
        <taxon>Fusarium</taxon>
    </lineage>
</organism>
<feature type="chain" id="PRO_0000281804" description="Histone-lysine N-methyltransferase SET9">
    <location>
        <begin position="1"/>
        <end position="662"/>
    </location>
</feature>
<feature type="domain" description="SET" evidence="3">
    <location>
        <begin position="115"/>
        <end position="229"/>
    </location>
</feature>
<feature type="region of interest" description="Disordered" evidence="5">
    <location>
        <begin position="260"/>
        <end position="437"/>
    </location>
</feature>
<feature type="region of interest" description="Disordered" evidence="5">
    <location>
        <begin position="484"/>
        <end position="516"/>
    </location>
</feature>
<feature type="region of interest" description="Disordered" evidence="5">
    <location>
        <begin position="601"/>
        <end position="662"/>
    </location>
</feature>
<feature type="compositionally biased region" description="Polar residues" evidence="5">
    <location>
        <begin position="304"/>
        <end position="326"/>
    </location>
</feature>
<feature type="compositionally biased region" description="Polar residues" evidence="5">
    <location>
        <begin position="355"/>
        <end position="379"/>
    </location>
</feature>
<feature type="compositionally biased region" description="Polar residues" evidence="5">
    <location>
        <begin position="398"/>
        <end position="437"/>
    </location>
</feature>
<feature type="compositionally biased region" description="Basic residues" evidence="5">
    <location>
        <begin position="647"/>
        <end position="656"/>
    </location>
</feature>
<evidence type="ECO:0000250" key="1"/>
<evidence type="ECO:0000250" key="2">
    <source>
        <dbReference type="UniProtKB" id="Q9USK2"/>
    </source>
</evidence>
<evidence type="ECO:0000255" key="3">
    <source>
        <dbReference type="PROSITE-ProRule" id="PRU00190"/>
    </source>
</evidence>
<evidence type="ECO:0000255" key="4">
    <source>
        <dbReference type="PROSITE-ProRule" id="PRU00900"/>
    </source>
</evidence>
<evidence type="ECO:0000256" key="5">
    <source>
        <dbReference type="SAM" id="MobiDB-lite"/>
    </source>
</evidence>
<name>SET9_GIBZE</name>
<gene>
    <name type="primary">SET9</name>
    <name type="ORF">FGRAMPH1_01T22513</name>
    <name type="ORF">FGRRES_06529_M</name>
    <name type="ORF">FGSG_06529</name>
</gene>
<reference key="1">
    <citation type="journal article" date="2007" name="Science">
        <title>The Fusarium graminearum genome reveals a link between localized polymorphism and pathogen specialization.</title>
        <authorList>
            <person name="Cuomo C.A."/>
            <person name="Gueldener U."/>
            <person name="Xu J.-R."/>
            <person name="Trail F."/>
            <person name="Turgeon B.G."/>
            <person name="Di Pietro A."/>
            <person name="Walton J.D."/>
            <person name="Ma L.-J."/>
            <person name="Baker S.E."/>
            <person name="Rep M."/>
            <person name="Adam G."/>
            <person name="Antoniw J."/>
            <person name="Baldwin T."/>
            <person name="Calvo S.E."/>
            <person name="Chang Y.-L."/>
            <person name="DeCaprio D."/>
            <person name="Gale L.R."/>
            <person name="Gnerre S."/>
            <person name="Goswami R.S."/>
            <person name="Hammond-Kosack K."/>
            <person name="Harris L.J."/>
            <person name="Hilburn K."/>
            <person name="Kennell J.C."/>
            <person name="Kroken S."/>
            <person name="Magnuson J.K."/>
            <person name="Mannhaupt G."/>
            <person name="Mauceli E.W."/>
            <person name="Mewes H.-W."/>
            <person name="Mitterbauer R."/>
            <person name="Muehlbauer G."/>
            <person name="Muensterkoetter M."/>
            <person name="Nelson D."/>
            <person name="O'Donnell K."/>
            <person name="Ouellet T."/>
            <person name="Qi W."/>
            <person name="Quesneville H."/>
            <person name="Roncero M.I.G."/>
            <person name="Seong K.-Y."/>
            <person name="Tetko I.V."/>
            <person name="Urban M."/>
            <person name="Waalwijk C."/>
            <person name="Ward T.J."/>
            <person name="Yao J."/>
            <person name="Birren B.W."/>
            <person name="Kistler H.C."/>
        </authorList>
    </citation>
    <scope>NUCLEOTIDE SEQUENCE [LARGE SCALE GENOMIC DNA]</scope>
    <source>
        <strain>ATCC MYA-4620 / CBS 123657 / FGSC 9075 / NRRL 31084 / PH-1</strain>
    </source>
</reference>
<reference key="2">
    <citation type="journal article" date="2010" name="Nature">
        <title>Comparative genomics reveals mobile pathogenicity chromosomes in Fusarium.</title>
        <authorList>
            <person name="Ma L.-J."/>
            <person name="van der Does H.C."/>
            <person name="Borkovich K.A."/>
            <person name="Coleman J.J."/>
            <person name="Daboussi M.-J."/>
            <person name="Di Pietro A."/>
            <person name="Dufresne M."/>
            <person name="Freitag M."/>
            <person name="Grabherr M."/>
            <person name="Henrissat B."/>
            <person name="Houterman P.M."/>
            <person name="Kang S."/>
            <person name="Shim W.-B."/>
            <person name="Woloshuk C."/>
            <person name="Xie X."/>
            <person name="Xu J.-R."/>
            <person name="Antoniw J."/>
            <person name="Baker S.E."/>
            <person name="Bluhm B.H."/>
            <person name="Breakspear A."/>
            <person name="Brown D.W."/>
            <person name="Butchko R.A.E."/>
            <person name="Chapman S."/>
            <person name="Coulson R."/>
            <person name="Coutinho P.M."/>
            <person name="Danchin E.G.J."/>
            <person name="Diener A."/>
            <person name="Gale L.R."/>
            <person name="Gardiner D.M."/>
            <person name="Goff S."/>
            <person name="Hammond-Kosack K.E."/>
            <person name="Hilburn K."/>
            <person name="Hua-Van A."/>
            <person name="Jonkers W."/>
            <person name="Kazan K."/>
            <person name="Kodira C.D."/>
            <person name="Koehrsen M."/>
            <person name="Kumar L."/>
            <person name="Lee Y.-H."/>
            <person name="Li L."/>
            <person name="Manners J.M."/>
            <person name="Miranda-Saavedra D."/>
            <person name="Mukherjee M."/>
            <person name="Park G."/>
            <person name="Park J."/>
            <person name="Park S.-Y."/>
            <person name="Proctor R.H."/>
            <person name="Regev A."/>
            <person name="Ruiz-Roldan M.C."/>
            <person name="Sain D."/>
            <person name="Sakthikumar S."/>
            <person name="Sykes S."/>
            <person name="Schwartz D.C."/>
            <person name="Turgeon B.G."/>
            <person name="Wapinski I."/>
            <person name="Yoder O."/>
            <person name="Young S."/>
            <person name="Zeng Q."/>
            <person name="Zhou S."/>
            <person name="Galagan J."/>
            <person name="Cuomo C.A."/>
            <person name="Kistler H.C."/>
            <person name="Rep M."/>
        </authorList>
    </citation>
    <scope>GENOME REANNOTATION</scope>
    <source>
        <strain>ATCC MYA-4620 / CBS 123657 / FGSC 9075 / NRRL 31084 / PH-1</strain>
    </source>
</reference>
<reference key="3">
    <citation type="journal article" date="2015" name="BMC Genomics">
        <title>The completed genome sequence of the pathogenic ascomycete fungus Fusarium graminearum.</title>
        <authorList>
            <person name="King R."/>
            <person name="Urban M."/>
            <person name="Hammond-Kosack M.C.U."/>
            <person name="Hassani-Pak K."/>
            <person name="Hammond-Kosack K.E."/>
        </authorList>
    </citation>
    <scope>NUCLEOTIDE SEQUENCE [LARGE SCALE GENOMIC DNA]</scope>
    <source>
        <strain>ATCC MYA-4620 / CBS 123657 / FGSC 9075 / NRRL 31084 / PH-1</strain>
    </source>
</reference>
<keyword id="KW-0156">Chromatin regulator</keyword>
<keyword id="KW-0158">Chromosome</keyword>
<keyword id="KW-0489">Methyltransferase</keyword>
<keyword id="KW-0539">Nucleus</keyword>
<keyword id="KW-1185">Reference proteome</keyword>
<keyword id="KW-0949">S-adenosyl-L-methionine</keyword>
<keyword id="KW-0808">Transferase</keyword>
<sequence>MAPSQTANKKPRMTLAQVSAYDDILTDALVDHVFYWTTVPKNRTSYHPSRGVKEEEISKILQEEVVLKKDLDSAEKRLLTTNGLKRFHNGLKTDKEKDDFRKHLRRYVQIYLPDCPWEVSSTNRYTIVSHEAAVTARRAIRRNEAIKYLSGVQVVITPEEEMAISSQKKDFSIVVSSRSKCTSLFMGPARFANHDCDANAKLMRTSHAGIEIVATRPIDAGEEITVTYGDNYFGENNCECLCKTCEDLLRNAWEPEEGTVPVQTGIGQSLSDGYSLRRRRRDDSISGSSRTPSVTPDMRPRITKANSRGSLLARDTSSVRSPSIDQTSRKRTHDVLATPPKTPAKRQKLGVQPIVSDSSSRGTSVTASESSGAVETDVTSPEKETPEPMQTPLKGASKKQNNEQSRLAPVSPQSTEGSRSPQQKNGALSSNRSSLDTMSIQAILNDPLESEVESEPESKMKKVTVVPPPVEPVAPIATSIEAVEEGQAADAEQSKRKKQPRRVHKEDTPPARVRTPGDYLLTPLLLSEPEMAWIQCTNCDEYFVQQNAYFTRASCPRCERHSKLYGYIWPKTDKAGPNDKEERILDHRTIHRFLDPDNERRVRNRKSFGASKTNTEEAEDVERGRKRFGTAGLMGRNASTTEDSGHRRSGRLRRVNSRFLDP</sequence>